<feature type="chain" id="PRO_0000384437" description="SH3 and F-BAR domain-containing protein DDB_G0274695">
    <location>
        <begin position="1"/>
        <end position="389"/>
    </location>
</feature>
<feature type="domain" description="F-BAR" evidence="3">
    <location>
        <begin position="3"/>
        <end position="258"/>
    </location>
</feature>
<feature type="domain" description="SH3" evidence="2">
    <location>
        <begin position="332"/>
        <end position="389"/>
    </location>
</feature>
<feature type="region of interest" description="Disordered" evidence="4">
    <location>
        <begin position="300"/>
        <end position="329"/>
    </location>
</feature>
<feature type="coiled-coil region" evidence="1">
    <location>
        <begin position="119"/>
        <end position="192"/>
    </location>
</feature>
<feature type="compositionally biased region" description="Low complexity" evidence="4">
    <location>
        <begin position="300"/>
        <end position="328"/>
    </location>
</feature>
<feature type="sequence conflict" description="In Ref. 1; AAM44380." evidence="5" ref="1">
    <original>S</original>
    <variation>F</variation>
    <location>
        <position position="204"/>
    </location>
</feature>
<feature type="sequence conflict" description="In Ref. 1; AAM44380." evidence="5" ref="1">
    <original>T</original>
    <variation>P</variation>
    <location>
        <position position="235"/>
    </location>
</feature>
<feature type="sequence conflict" description="In Ref. 1; AAM44380." evidence="5" ref="1">
    <original>T</original>
    <variation>P</variation>
    <location>
        <position position="242"/>
    </location>
</feature>
<feature type="sequence conflict" description="In Ref. 1; AAM44380." evidence="5" ref="1">
    <original>K</original>
    <variation>N</variation>
    <location>
        <position position="335"/>
    </location>
</feature>
<keyword id="KW-0175">Coiled coil</keyword>
<keyword id="KW-1185">Reference proteome</keyword>
<keyword id="KW-0728">SH3 domain</keyword>
<proteinExistence type="predicted"/>
<accession>Q555L8</accession>
<accession>Q8MML2</accession>
<accession>Q8T177</accession>
<reference key="1">
    <citation type="journal article" date="2002" name="Nature">
        <title>Sequence and analysis of chromosome 2 of Dictyostelium discoideum.</title>
        <authorList>
            <person name="Gloeckner G."/>
            <person name="Eichinger L."/>
            <person name="Szafranski K."/>
            <person name="Pachebat J.A."/>
            <person name="Bankier A.T."/>
            <person name="Dear P.H."/>
            <person name="Lehmann R."/>
            <person name="Baumgart C."/>
            <person name="Parra G."/>
            <person name="Abril J.F."/>
            <person name="Guigo R."/>
            <person name="Kumpf K."/>
            <person name="Tunggal B."/>
            <person name="Cox E.C."/>
            <person name="Quail M.A."/>
            <person name="Platzer M."/>
            <person name="Rosenthal A."/>
            <person name="Noegel A.A."/>
        </authorList>
    </citation>
    <scope>NUCLEOTIDE SEQUENCE [LARGE SCALE GENOMIC DNA]</scope>
    <source>
        <strain>AX4</strain>
    </source>
</reference>
<reference key="2">
    <citation type="journal article" date="2005" name="Nature">
        <title>The genome of the social amoeba Dictyostelium discoideum.</title>
        <authorList>
            <person name="Eichinger L."/>
            <person name="Pachebat J.A."/>
            <person name="Gloeckner G."/>
            <person name="Rajandream M.A."/>
            <person name="Sucgang R."/>
            <person name="Berriman M."/>
            <person name="Song J."/>
            <person name="Olsen R."/>
            <person name="Szafranski K."/>
            <person name="Xu Q."/>
            <person name="Tunggal B."/>
            <person name="Kummerfeld S."/>
            <person name="Madera M."/>
            <person name="Konfortov B.A."/>
            <person name="Rivero F."/>
            <person name="Bankier A.T."/>
            <person name="Lehmann R."/>
            <person name="Hamlin N."/>
            <person name="Davies R."/>
            <person name="Gaudet P."/>
            <person name="Fey P."/>
            <person name="Pilcher K."/>
            <person name="Chen G."/>
            <person name="Saunders D."/>
            <person name="Sodergren E.J."/>
            <person name="Davis P."/>
            <person name="Kerhornou A."/>
            <person name="Nie X."/>
            <person name="Hall N."/>
            <person name="Anjard C."/>
            <person name="Hemphill L."/>
            <person name="Bason N."/>
            <person name="Farbrother P."/>
            <person name="Desany B."/>
            <person name="Just E."/>
            <person name="Morio T."/>
            <person name="Rost R."/>
            <person name="Churcher C.M."/>
            <person name="Cooper J."/>
            <person name="Haydock S."/>
            <person name="van Driessche N."/>
            <person name="Cronin A."/>
            <person name="Goodhead I."/>
            <person name="Muzny D.M."/>
            <person name="Mourier T."/>
            <person name="Pain A."/>
            <person name="Lu M."/>
            <person name="Harper D."/>
            <person name="Lindsay R."/>
            <person name="Hauser H."/>
            <person name="James K.D."/>
            <person name="Quiles M."/>
            <person name="Madan Babu M."/>
            <person name="Saito T."/>
            <person name="Buchrieser C."/>
            <person name="Wardroper A."/>
            <person name="Felder M."/>
            <person name="Thangavelu M."/>
            <person name="Johnson D."/>
            <person name="Knights A."/>
            <person name="Loulseged H."/>
            <person name="Mungall K.L."/>
            <person name="Oliver K."/>
            <person name="Price C."/>
            <person name="Quail M.A."/>
            <person name="Urushihara H."/>
            <person name="Hernandez J."/>
            <person name="Rabbinowitsch E."/>
            <person name="Steffen D."/>
            <person name="Sanders M."/>
            <person name="Ma J."/>
            <person name="Kohara Y."/>
            <person name="Sharp S."/>
            <person name="Simmonds M.N."/>
            <person name="Spiegler S."/>
            <person name="Tivey A."/>
            <person name="Sugano S."/>
            <person name="White B."/>
            <person name="Walker D."/>
            <person name="Woodward J.R."/>
            <person name="Winckler T."/>
            <person name="Tanaka Y."/>
            <person name="Shaulsky G."/>
            <person name="Schleicher M."/>
            <person name="Weinstock G.M."/>
            <person name="Rosenthal A."/>
            <person name="Cox E.C."/>
            <person name="Chisholm R.L."/>
            <person name="Gibbs R.A."/>
            <person name="Loomis W.F."/>
            <person name="Platzer M."/>
            <person name="Kay R.R."/>
            <person name="Williams J.G."/>
            <person name="Dear P.H."/>
            <person name="Noegel A.A."/>
            <person name="Barrell B.G."/>
            <person name="Kuspa A."/>
        </authorList>
    </citation>
    <scope>NUCLEOTIDE SEQUENCE [LARGE SCALE GENOMIC DNA]</scope>
    <source>
        <strain>AX4</strain>
    </source>
</reference>
<sequence>MSEQFKDNFWGPNGFETIEKRMNQGTESTRLFLLFLKERAAIEENYSKSLQKLLKSTSQLIEYGTLRDAWYGVRGEAESLVRVHHELGQKIEKDIVAPFSKFKSEQKKVKKNFLYDAYKLNKERKDMESSITKTRAKYDDYSKQAETIAITMETAKNTKTAAEVGKIQSKLQKIQRDASSAEQDYRDSVNKLSMYQPTWEDKVSSNYHTLQLTEEERIDYIKVQLEKYVGAIKSTVPDTETTNRNLVNVITQIDKLEDIHCFVRESRTGTEKPPPPQFISFGGKSSSDYIQNKASYSAPLTSSVSSNSLTSSYNSATTTPTPAPRSTPINLSKKKQAKALYDYVGSDATELDFFAGDIITILDEDESGWFRGELGDRIGLYPSNYCEPI</sequence>
<dbReference type="EMBL" id="AC123513">
    <property type="protein sequence ID" value="AAM44380.1"/>
    <property type="molecule type" value="Genomic_DNA"/>
</dbReference>
<dbReference type="EMBL" id="AAFI02000012">
    <property type="protein sequence ID" value="EAL70240.1"/>
    <property type="molecule type" value="Genomic_DNA"/>
</dbReference>
<dbReference type="RefSeq" id="XP_644048.1">
    <property type="nucleotide sequence ID" value="XM_638956.1"/>
</dbReference>
<dbReference type="SMR" id="Q555L8"/>
<dbReference type="FunCoup" id="Q555L8">
    <property type="interactions" value="19"/>
</dbReference>
<dbReference type="STRING" id="44689.Q555L8"/>
<dbReference type="GlyGen" id="Q555L8">
    <property type="glycosylation" value="1 site"/>
</dbReference>
<dbReference type="PaxDb" id="44689-DDB0266841"/>
<dbReference type="EnsemblProtists" id="EAL70240">
    <property type="protein sequence ID" value="EAL70240"/>
    <property type="gene ID" value="DDB_G0274695"/>
</dbReference>
<dbReference type="GeneID" id="8619478"/>
<dbReference type="KEGG" id="ddi:DDB_G0274695"/>
<dbReference type="dictyBase" id="DDB_G0274695">
    <property type="gene designation" value="slp"/>
</dbReference>
<dbReference type="VEuPathDB" id="AmoebaDB:DDB_G0274695"/>
<dbReference type="eggNOG" id="KOG2398">
    <property type="taxonomic scope" value="Eukaryota"/>
</dbReference>
<dbReference type="HOGENOM" id="CLU_710646_0_0_1"/>
<dbReference type="InParanoid" id="Q555L8"/>
<dbReference type="OMA" id="PIEYQNY"/>
<dbReference type="PhylomeDB" id="Q555L8"/>
<dbReference type="Reactome" id="R-DDI-8856828">
    <property type="pathway name" value="Clathrin-mediated endocytosis"/>
</dbReference>
<dbReference type="PRO" id="PR:Q555L8"/>
<dbReference type="Proteomes" id="UP000002195">
    <property type="component" value="Chromosome 2"/>
</dbReference>
<dbReference type="GO" id="GO:0005737">
    <property type="term" value="C:cytoplasm"/>
    <property type="evidence" value="ECO:0000318"/>
    <property type="project" value="GO_Central"/>
</dbReference>
<dbReference type="GO" id="GO:0048471">
    <property type="term" value="C:perinuclear region of cytoplasm"/>
    <property type="evidence" value="ECO:0000314"/>
    <property type="project" value="dictyBase"/>
</dbReference>
<dbReference type="GO" id="GO:0031982">
    <property type="term" value="C:vesicle"/>
    <property type="evidence" value="ECO:0000314"/>
    <property type="project" value="dictyBase"/>
</dbReference>
<dbReference type="GO" id="GO:0008017">
    <property type="term" value="F:microtubule binding"/>
    <property type="evidence" value="ECO:0000314"/>
    <property type="project" value="dictyBase"/>
</dbReference>
<dbReference type="GO" id="GO:0030041">
    <property type="term" value="P:actin filament polymerization"/>
    <property type="evidence" value="ECO:0000316"/>
    <property type="project" value="dictyBase"/>
</dbReference>
<dbReference type="GO" id="GO:0043327">
    <property type="term" value="P:chemotaxis to cAMP"/>
    <property type="evidence" value="ECO:0000316"/>
    <property type="project" value="dictyBase"/>
</dbReference>
<dbReference type="GO" id="GO:0016050">
    <property type="term" value="P:vesicle organization"/>
    <property type="evidence" value="ECO:0000316"/>
    <property type="project" value="dictyBase"/>
</dbReference>
<dbReference type="CDD" id="cd07610">
    <property type="entry name" value="FCH_F-BAR"/>
    <property type="match status" value="1"/>
</dbReference>
<dbReference type="CDD" id="cd00174">
    <property type="entry name" value="SH3"/>
    <property type="match status" value="1"/>
</dbReference>
<dbReference type="FunFam" id="1.20.1270.60:FF:000220">
    <property type="entry name" value="SH3 and F-BAR domain-containing protein DDB_G0274695"/>
    <property type="match status" value="1"/>
</dbReference>
<dbReference type="FunFam" id="2.30.30.40:FF:000072">
    <property type="entry name" value="Unconventional Myosin IB"/>
    <property type="match status" value="1"/>
</dbReference>
<dbReference type="Gene3D" id="1.20.1270.60">
    <property type="entry name" value="Arfaptin homology (AH) domain/BAR domain"/>
    <property type="match status" value="1"/>
</dbReference>
<dbReference type="Gene3D" id="2.30.30.40">
    <property type="entry name" value="SH3 Domains"/>
    <property type="match status" value="1"/>
</dbReference>
<dbReference type="InterPro" id="IPR027267">
    <property type="entry name" value="AH/BAR_dom_sf"/>
</dbReference>
<dbReference type="InterPro" id="IPR031160">
    <property type="entry name" value="F_BAR"/>
</dbReference>
<dbReference type="InterPro" id="IPR001060">
    <property type="entry name" value="FCH_dom"/>
</dbReference>
<dbReference type="InterPro" id="IPR036028">
    <property type="entry name" value="SH3-like_dom_sf"/>
</dbReference>
<dbReference type="InterPro" id="IPR001452">
    <property type="entry name" value="SH3_domain"/>
</dbReference>
<dbReference type="PANTHER" id="PTHR23065">
    <property type="entry name" value="PROLINE-SERINE-THREONINE PHOSPHATASE INTERACTING PROTEIN 1"/>
    <property type="match status" value="1"/>
</dbReference>
<dbReference type="PANTHER" id="PTHR23065:SF58">
    <property type="entry name" value="SH3 AND F-BAR DOMAIN-CONTAINING PROTEIN DDB_G0274695"/>
    <property type="match status" value="1"/>
</dbReference>
<dbReference type="Pfam" id="PF00611">
    <property type="entry name" value="FCH"/>
    <property type="match status" value="1"/>
</dbReference>
<dbReference type="Pfam" id="PF14604">
    <property type="entry name" value="SH3_9"/>
    <property type="match status" value="1"/>
</dbReference>
<dbReference type="PRINTS" id="PR00452">
    <property type="entry name" value="SH3DOMAIN"/>
</dbReference>
<dbReference type="SMART" id="SM00055">
    <property type="entry name" value="FCH"/>
    <property type="match status" value="1"/>
</dbReference>
<dbReference type="SMART" id="SM00326">
    <property type="entry name" value="SH3"/>
    <property type="match status" value="1"/>
</dbReference>
<dbReference type="SUPFAM" id="SSF103657">
    <property type="entry name" value="BAR/IMD domain-like"/>
    <property type="match status" value="1"/>
</dbReference>
<dbReference type="SUPFAM" id="SSF50044">
    <property type="entry name" value="SH3-domain"/>
    <property type="match status" value="1"/>
</dbReference>
<dbReference type="PROSITE" id="PS51741">
    <property type="entry name" value="F_BAR"/>
    <property type="match status" value="1"/>
</dbReference>
<dbReference type="PROSITE" id="PS50002">
    <property type="entry name" value="SH3"/>
    <property type="match status" value="1"/>
</dbReference>
<evidence type="ECO:0000255" key="1"/>
<evidence type="ECO:0000255" key="2">
    <source>
        <dbReference type="PROSITE-ProRule" id="PRU00192"/>
    </source>
</evidence>
<evidence type="ECO:0000255" key="3">
    <source>
        <dbReference type="PROSITE-ProRule" id="PRU01077"/>
    </source>
</evidence>
<evidence type="ECO:0000256" key="4">
    <source>
        <dbReference type="SAM" id="MobiDB-lite"/>
    </source>
</evidence>
<evidence type="ECO:0000305" key="5"/>
<name>Y4695_DICDI</name>
<organism>
    <name type="scientific">Dictyostelium discoideum</name>
    <name type="common">Social amoeba</name>
    <dbReference type="NCBI Taxonomy" id="44689"/>
    <lineage>
        <taxon>Eukaryota</taxon>
        <taxon>Amoebozoa</taxon>
        <taxon>Evosea</taxon>
        <taxon>Eumycetozoa</taxon>
        <taxon>Dictyostelia</taxon>
        <taxon>Dictyosteliales</taxon>
        <taxon>Dictyosteliaceae</taxon>
        <taxon>Dictyostelium</taxon>
    </lineage>
</organism>
<protein>
    <recommendedName>
        <fullName>SH3 and F-BAR domain-containing protein DDB_G0274695</fullName>
    </recommendedName>
</protein>
<gene>
    <name type="ORF">DDB_G0274695</name>
</gene>